<keyword id="KW-0067">ATP-binding</keyword>
<keyword id="KW-0173">Coenzyme A biosynthesis</keyword>
<keyword id="KW-0963">Cytoplasm</keyword>
<keyword id="KW-0418">Kinase</keyword>
<keyword id="KW-0547">Nucleotide-binding</keyword>
<keyword id="KW-1185">Reference proteome</keyword>
<keyword id="KW-0808">Transferase</keyword>
<comment type="catalytic activity">
    <reaction evidence="1">
        <text>(R)-pantothenate + ATP = (R)-4'-phosphopantothenate + ADP + H(+)</text>
        <dbReference type="Rhea" id="RHEA:16373"/>
        <dbReference type="ChEBI" id="CHEBI:10986"/>
        <dbReference type="ChEBI" id="CHEBI:15378"/>
        <dbReference type="ChEBI" id="CHEBI:29032"/>
        <dbReference type="ChEBI" id="CHEBI:30616"/>
        <dbReference type="ChEBI" id="CHEBI:456216"/>
        <dbReference type="EC" id="2.7.1.33"/>
    </reaction>
</comment>
<comment type="pathway">
    <text evidence="1">Cofactor biosynthesis; coenzyme A biosynthesis; CoA from (R)-pantothenate: step 1/5.</text>
</comment>
<comment type="subcellular location">
    <subcellularLocation>
        <location evidence="1">Cytoplasm</location>
    </subcellularLocation>
</comment>
<comment type="similarity">
    <text evidence="1">Belongs to the prokaryotic pantothenate kinase family.</text>
</comment>
<proteinExistence type="inferred from homology"/>
<sequence length="331" mass="37616">MSIATEIIGVPETLDHFQSDSYSPYHFFSSEQWAKFRADTPLTLTSDEVKRLRSMGDPIDLDEVRRIYLSLSRLLSAHVESSQMLFEQRNRFLSLSDVTKTPFVIGIAGSVAVGKSTTARVLKELLGRWPSSPKVDLVTTDGFLHPNAVLQREKLMQRKGFPESYDTAAILRFLSAIKAGQPDVKAPSYSHLVYDVLPDEYKIVDRPDILIFEGINVLQSRDLPAGGKIVPMVSDFFDFSIYIDAAEDLIHNWYVARFMRLRETAFRDPNSYFHRYASISDAEALEIAGDLWANINLKNLRQNILPTRPRADLILKKGKDHLIEQVALRKL</sequence>
<dbReference type="EC" id="2.7.1.33" evidence="1"/>
<dbReference type="EMBL" id="CP001191">
    <property type="protein sequence ID" value="ACI57235.1"/>
    <property type="molecule type" value="Genomic_DNA"/>
</dbReference>
<dbReference type="RefSeq" id="WP_003589484.1">
    <property type="nucleotide sequence ID" value="NC_011369.1"/>
</dbReference>
<dbReference type="SMR" id="B5ZV89"/>
<dbReference type="STRING" id="395492.Rleg2_3973"/>
<dbReference type="KEGG" id="rlt:Rleg2_3973"/>
<dbReference type="eggNOG" id="COG1072">
    <property type="taxonomic scope" value="Bacteria"/>
</dbReference>
<dbReference type="HOGENOM" id="CLU_053818_1_1_5"/>
<dbReference type="UniPathway" id="UPA00241">
    <property type="reaction ID" value="UER00352"/>
</dbReference>
<dbReference type="Proteomes" id="UP000008330">
    <property type="component" value="Chromosome"/>
</dbReference>
<dbReference type="GO" id="GO:0005737">
    <property type="term" value="C:cytoplasm"/>
    <property type="evidence" value="ECO:0007669"/>
    <property type="project" value="UniProtKB-SubCell"/>
</dbReference>
<dbReference type="GO" id="GO:0005524">
    <property type="term" value="F:ATP binding"/>
    <property type="evidence" value="ECO:0007669"/>
    <property type="project" value="UniProtKB-UniRule"/>
</dbReference>
<dbReference type="GO" id="GO:0004594">
    <property type="term" value="F:pantothenate kinase activity"/>
    <property type="evidence" value="ECO:0007669"/>
    <property type="project" value="UniProtKB-UniRule"/>
</dbReference>
<dbReference type="GO" id="GO:0015937">
    <property type="term" value="P:coenzyme A biosynthetic process"/>
    <property type="evidence" value="ECO:0007669"/>
    <property type="project" value="UniProtKB-UniRule"/>
</dbReference>
<dbReference type="CDD" id="cd02025">
    <property type="entry name" value="PanK"/>
    <property type="match status" value="1"/>
</dbReference>
<dbReference type="Gene3D" id="3.40.50.300">
    <property type="entry name" value="P-loop containing nucleotide triphosphate hydrolases"/>
    <property type="match status" value="1"/>
</dbReference>
<dbReference type="HAMAP" id="MF_00215">
    <property type="entry name" value="Pantothen_kinase_1"/>
    <property type="match status" value="1"/>
</dbReference>
<dbReference type="InterPro" id="IPR027417">
    <property type="entry name" value="P-loop_NTPase"/>
</dbReference>
<dbReference type="InterPro" id="IPR004566">
    <property type="entry name" value="PanK"/>
</dbReference>
<dbReference type="InterPro" id="IPR006083">
    <property type="entry name" value="PRK/URK"/>
</dbReference>
<dbReference type="NCBIfam" id="TIGR00554">
    <property type="entry name" value="panK_bact"/>
    <property type="match status" value="1"/>
</dbReference>
<dbReference type="PANTHER" id="PTHR10285">
    <property type="entry name" value="URIDINE KINASE"/>
    <property type="match status" value="1"/>
</dbReference>
<dbReference type="Pfam" id="PF00485">
    <property type="entry name" value="PRK"/>
    <property type="match status" value="1"/>
</dbReference>
<dbReference type="PIRSF" id="PIRSF000545">
    <property type="entry name" value="Pantothenate_kin"/>
    <property type="match status" value="1"/>
</dbReference>
<dbReference type="SUPFAM" id="SSF52540">
    <property type="entry name" value="P-loop containing nucleoside triphosphate hydrolases"/>
    <property type="match status" value="1"/>
</dbReference>
<accession>B5ZV89</accession>
<feature type="chain" id="PRO_1000099941" description="Pantothenate kinase">
    <location>
        <begin position="1"/>
        <end position="331"/>
    </location>
</feature>
<feature type="binding site" evidence="1">
    <location>
        <begin position="109"/>
        <end position="116"/>
    </location>
    <ligand>
        <name>ATP</name>
        <dbReference type="ChEBI" id="CHEBI:30616"/>
    </ligand>
</feature>
<gene>
    <name evidence="1" type="primary">coaA</name>
    <name type="ordered locus">Rleg2_3973</name>
</gene>
<organism>
    <name type="scientific">Rhizobium leguminosarum bv. trifolii (strain WSM2304)</name>
    <dbReference type="NCBI Taxonomy" id="395492"/>
    <lineage>
        <taxon>Bacteria</taxon>
        <taxon>Pseudomonadati</taxon>
        <taxon>Pseudomonadota</taxon>
        <taxon>Alphaproteobacteria</taxon>
        <taxon>Hyphomicrobiales</taxon>
        <taxon>Rhizobiaceae</taxon>
        <taxon>Rhizobium/Agrobacterium group</taxon>
        <taxon>Rhizobium</taxon>
    </lineage>
</organism>
<reference key="1">
    <citation type="journal article" date="2010" name="Stand. Genomic Sci.">
        <title>Complete genome sequence of Rhizobium leguminosarum bv trifolii strain WSM2304, an effective microsymbiont of the South American clover Trifolium polymorphum.</title>
        <authorList>
            <person name="Reeve W."/>
            <person name="O'Hara G."/>
            <person name="Chain P."/>
            <person name="Ardley J."/>
            <person name="Brau L."/>
            <person name="Nandesena K."/>
            <person name="Tiwari R."/>
            <person name="Malfatti S."/>
            <person name="Kiss H."/>
            <person name="Lapidus A."/>
            <person name="Copeland A."/>
            <person name="Nolan M."/>
            <person name="Land M."/>
            <person name="Ivanova N."/>
            <person name="Mavromatis K."/>
            <person name="Markowitz V."/>
            <person name="Kyrpides N."/>
            <person name="Melino V."/>
            <person name="Denton M."/>
            <person name="Yates R."/>
            <person name="Howieson J."/>
        </authorList>
    </citation>
    <scope>NUCLEOTIDE SEQUENCE [LARGE SCALE GENOMIC DNA]</scope>
    <source>
        <strain>WSM2304</strain>
    </source>
</reference>
<evidence type="ECO:0000255" key="1">
    <source>
        <dbReference type="HAMAP-Rule" id="MF_00215"/>
    </source>
</evidence>
<protein>
    <recommendedName>
        <fullName evidence="1">Pantothenate kinase</fullName>
        <ecNumber evidence="1">2.7.1.33</ecNumber>
    </recommendedName>
    <alternativeName>
        <fullName evidence="1">Pantothenic acid kinase</fullName>
    </alternativeName>
</protein>
<name>COAA_RHILW</name>